<protein>
    <recommendedName>
        <fullName>Tubulin gamma chain</fullName>
    </recommendedName>
    <alternativeName>
        <fullName>Gamma-tubulin</fullName>
    </alternativeName>
</protein>
<feature type="chain" id="PRO_0000048447" description="Tubulin gamma chain">
    <location>
        <begin position="1"/>
        <end position="470"/>
    </location>
</feature>
<feature type="binding site" evidence="2">
    <location>
        <begin position="144"/>
        <end position="150"/>
    </location>
    <ligand>
        <name>GTP</name>
        <dbReference type="ChEBI" id="CHEBI:37565"/>
    </ligand>
</feature>
<evidence type="ECO:0000250" key="1"/>
<evidence type="ECO:0000255" key="2"/>
<evidence type="ECO:0000305" key="3"/>
<accession>Q75A43</accession>
<gene>
    <name type="primary">TUB4</name>
    <name type="ordered locus">ADR076C</name>
</gene>
<dbReference type="EMBL" id="AE016817">
    <property type="protein sequence ID" value="AAS51996.1"/>
    <property type="molecule type" value="Genomic_DNA"/>
</dbReference>
<dbReference type="RefSeq" id="NP_984172.1">
    <property type="nucleotide sequence ID" value="NM_209525.1"/>
</dbReference>
<dbReference type="SMR" id="Q75A43"/>
<dbReference type="FunCoup" id="Q75A43">
    <property type="interactions" value="731"/>
</dbReference>
<dbReference type="STRING" id="284811.Q75A43"/>
<dbReference type="EnsemblFungi" id="AAS51996">
    <property type="protein sequence ID" value="AAS51996"/>
    <property type="gene ID" value="AGOS_ADR076C"/>
</dbReference>
<dbReference type="GeneID" id="4620321"/>
<dbReference type="KEGG" id="ago:AGOS_ADR076C"/>
<dbReference type="eggNOG" id="KOG1374">
    <property type="taxonomic scope" value="Eukaryota"/>
</dbReference>
<dbReference type="HOGENOM" id="CLU_015718_1_0_1"/>
<dbReference type="InParanoid" id="Q75A43"/>
<dbReference type="OMA" id="HRYISIL"/>
<dbReference type="OrthoDB" id="10249382at2759"/>
<dbReference type="Proteomes" id="UP000000591">
    <property type="component" value="Chromosome IV"/>
</dbReference>
<dbReference type="GO" id="GO:0005737">
    <property type="term" value="C:cytoplasm"/>
    <property type="evidence" value="ECO:0000318"/>
    <property type="project" value="GO_Central"/>
</dbReference>
<dbReference type="GO" id="GO:0000931">
    <property type="term" value="C:gamma-tubulin ring complex"/>
    <property type="evidence" value="ECO:0000318"/>
    <property type="project" value="GO_Central"/>
</dbReference>
<dbReference type="GO" id="GO:0008275">
    <property type="term" value="C:gamma-tubulin small complex"/>
    <property type="evidence" value="ECO:0007669"/>
    <property type="project" value="EnsemblFungi"/>
</dbReference>
<dbReference type="GO" id="GO:0005822">
    <property type="term" value="C:inner plaque of spindle pole body"/>
    <property type="evidence" value="ECO:0007669"/>
    <property type="project" value="EnsemblFungi"/>
</dbReference>
<dbReference type="GO" id="GO:0005874">
    <property type="term" value="C:microtubule"/>
    <property type="evidence" value="ECO:0007669"/>
    <property type="project" value="UniProtKB-KW"/>
</dbReference>
<dbReference type="GO" id="GO:0005634">
    <property type="term" value="C:nucleus"/>
    <property type="evidence" value="ECO:0000318"/>
    <property type="project" value="GO_Central"/>
</dbReference>
<dbReference type="GO" id="GO:0005824">
    <property type="term" value="C:outer plaque of spindle pole body"/>
    <property type="evidence" value="ECO:0007669"/>
    <property type="project" value="EnsemblFungi"/>
</dbReference>
<dbReference type="GO" id="GO:0005819">
    <property type="term" value="C:spindle"/>
    <property type="evidence" value="ECO:0000318"/>
    <property type="project" value="GO_Central"/>
</dbReference>
<dbReference type="GO" id="GO:0005816">
    <property type="term" value="C:spindle pole body"/>
    <property type="evidence" value="ECO:0000318"/>
    <property type="project" value="GO_Central"/>
</dbReference>
<dbReference type="GO" id="GO:0005525">
    <property type="term" value="F:GTP binding"/>
    <property type="evidence" value="ECO:0000318"/>
    <property type="project" value="GO_Central"/>
</dbReference>
<dbReference type="GO" id="GO:0140490">
    <property type="term" value="F:microtubule nucleator activity"/>
    <property type="evidence" value="ECO:0000318"/>
    <property type="project" value="GO_Central"/>
</dbReference>
<dbReference type="GO" id="GO:0005200">
    <property type="term" value="F:structural constituent of cytoskeleton"/>
    <property type="evidence" value="ECO:0007669"/>
    <property type="project" value="EnsemblFungi"/>
</dbReference>
<dbReference type="GO" id="GO:0031122">
    <property type="term" value="P:cytoplasmic microtubule organization"/>
    <property type="evidence" value="ECO:0007669"/>
    <property type="project" value="InterPro"/>
</dbReference>
<dbReference type="GO" id="GO:0000212">
    <property type="term" value="P:meiotic spindle organization"/>
    <property type="evidence" value="ECO:0000318"/>
    <property type="project" value="GO_Central"/>
</dbReference>
<dbReference type="GO" id="GO:0007020">
    <property type="term" value="P:microtubule nucleation"/>
    <property type="evidence" value="ECO:0000318"/>
    <property type="project" value="GO_Central"/>
</dbReference>
<dbReference type="GO" id="GO:0051417">
    <property type="term" value="P:microtubule nucleation by spindle pole body"/>
    <property type="evidence" value="ECO:0007669"/>
    <property type="project" value="EnsemblFungi"/>
</dbReference>
<dbReference type="GO" id="GO:0000278">
    <property type="term" value="P:mitotic cell cycle"/>
    <property type="evidence" value="ECO:0000318"/>
    <property type="project" value="GO_Central"/>
</dbReference>
<dbReference type="GO" id="GO:0000070">
    <property type="term" value="P:mitotic sister chromatid segregation"/>
    <property type="evidence" value="ECO:0000318"/>
    <property type="project" value="GO_Central"/>
</dbReference>
<dbReference type="GO" id="GO:0007052">
    <property type="term" value="P:mitotic spindle organization"/>
    <property type="evidence" value="ECO:0000318"/>
    <property type="project" value="GO_Central"/>
</dbReference>
<dbReference type="GO" id="GO:2000767">
    <property type="term" value="P:positive regulation of cytoplasmic translation"/>
    <property type="evidence" value="ECO:0007669"/>
    <property type="project" value="EnsemblFungi"/>
</dbReference>
<dbReference type="CDD" id="cd02188">
    <property type="entry name" value="gamma_tubulin"/>
    <property type="match status" value="1"/>
</dbReference>
<dbReference type="FunFam" id="1.10.287.600:FF:000004">
    <property type="entry name" value="Tubulin gamma chain"/>
    <property type="match status" value="1"/>
</dbReference>
<dbReference type="Gene3D" id="1.10.287.600">
    <property type="entry name" value="Helix hairpin bin"/>
    <property type="match status" value="1"/>
</dbReference>
<dbReference type="Gene3D" id="3.30.1330.20">
    <property type="entry name" value="Tubulin/FtsZ, C-terminal domain"/>
    <property type="match status" value="1"/>
</dbReference>
<dbReference type="Gene3D" id="3.40.50.1440">
    <property type="entry name" value="Tubulin/FtsZ, GTPase domain"/>
    <property type="match status" value="1"/>
</dbReference>
<dbReference type="InterPro" id="IPR002454">
    <property type="entry name" value="Gamma_tubulin"/>
</dbReference>
<dbReference type="InterPro" id="IPR008280">
    <property type="entry name" value="Tub_FtsZ_C"/>
</dbReference>
<dbReference type="InterPro" id="IPR000217">
    <property type="entry name" value="Tubulin"/>
</dbReference>
<dbReference type="InterPro" id="IPR037103">
    <property type="entry name" value="Tubulin/FtsZ-like_C"/>
</dbReference>
<dbReference type="InterPro" id="IPR018316">
    <property type="entry name" value="Tubulin/FtsZ_2-layer-sand-dom"/>
</dbReference>
<dbReference type="InterPro" id="IPR036525">
    <property type="entry name" value="Tubulin/FtsZ_GTPase_sf"/>
</dbReference>
<dbReference type="InterPro" id="IPR023123">
    <property type="entry name" value="Tubulin_C"/>
</dbReference>
<dbReference type="InterPro" id="IPR017975">
    <property type="entry name" value="Tubulin_CS"/>
</dbReference>
<dbReference type="InterPro" id="IPR003008">
    <property type="entry name" value="Tubulin_FtsZ_GTPase"/>
</dbReference>
<dbReference type="PANTHER" id="PTHR11588">
    <property type="entry name" value="TUBULIN"/>
    <property type="match status" value="1"/>
</dbReference>
<dbReference type="Pfam" id="PF00091">
    <property type="entry name" value="Tubulin"/>
    <property type="match status" value="1"/>
</dbReference>
<dbReference type="Pfam" id="PF03953">
    <property type="entry name" value="Tubulin_C"/>
    <property type="match status" value="1"/>
</dbReference>
<dbReference type="PRINTS" id="PR01164">
    <property type="entry name" value="GAMMATUBULIN"/>
</dbReference>
<dbReference type="PRINTS" id="PR01161">
    <property type="entry name" value="TUBULIN"/>
</dbReference>
<dbReference type="SMART" id="SM00864">
    <property type="entry name" value="Tubulin"/>
    <property type="match status" value="1"/>
</dbReference>
<dbReference type="SMART" id="SM00865">
    <property type="entry name" value="Tubulin_C"/>
    <property type="match status" value="1"/>
</dbReference>
<dbReference type="SUPFAM" id="SSF55307">
    <property type="entry name" value="Tubulin C-terminal domain-like"/>
    <property type="match status" value="1"/>
</dbReference>
<dbReference type="SUPFAM" id="SSF52490">
    <property type="entry name" value="Tubulin nucleotide-binding domain-like"/>
    <property type="match status" value="1"/>
</dbReference>
<dbReference type="PROSITE" id="PS00227">
    <property type="entry name" value="TUBULIN"/>
    <property type="match status" value="1"/>
</dbReference>
<comment type="function">
    <text evidence="1">Tubulin is the major constituent of microtubules. The gamma chain is found at microtubule organizing centers (MTOC) such as the spindle poles or the centrosome, suggesting that it is involved in the minus-end nucleation of microtubule assembly (By similarity).</text>
</comment>
<comment type="subcellular location">
    <subcellularLocation>
        <location evidence="3">Cytoplasm</location>
        <location evidence="3">Cytoskeleton</location>
        <location evidence="3">Microtubule organizing center</location>
        <location evidence="3">Spindle pole body</location>
    </subcellularLocation>
</comment>
<comment type="similarity">
    <text evidence="3">Belongs to the tubulin family.</text>
</comment>
<name>TBG_EREGS</name>
<proteinExistence type="inferred from homology"/>
<sequence>MTGEIISIQVGQCGNQVGKQFWGQLAREHGIGVDGQSLHPEDANVVREDDTNVFFRQNDHNRFTPRALLYDLEPSAIGDVQNCFPGFFNERNVWISKEELGAGNTWSIGYDYGLEKQDEFMNMIDKEIDATGNFEGFQLIHSVAGGTGSGLGSNLLEALSDRYHKKIVSTYSVFPSRESEVVVQPYNTILTLRRLIDNSDASVLFDNDALLNLTARVLRDSNTSYQQTNQLIASVMSSVTNSLRFPSYMYNSLPSIFSTLVPTPELHFLAPSFTPFTSDFVPGAKDFKRLSAYDVILDLFDKNNSMVTRDTDTPVYLAIYDALQGAVEQSDVTRAILKTQQRIKFAPWSPTSLHVNLGRKSPYNSSANSDYVSGMMLANTSSIVSVFQKTVSSFDVIFKRGAFLHKFQNGKMFQHGWDEFLESREVIQGVIDEYIAAEQENYLDDVLEEDGNFVGGDAEMIDIESNDDII</sequence>
<reference key="1">
    <citation type="journal article" date="2004" name="Science">
        <title>The Ashbya gossypii genome as a tool for mapping the ancient Saccharomyces cerevisiae genome.</title>
        <authorList>
            <person name="Dietrich F.S."/>
            <person name="Voegeli S."/>
            <person name="Brachat S."/>
            <person name="Lerch A."/>
            <person name="Gates K."/>
            <person name="Steiner S."/>
            <person name="Mohr C."/>
            <person name="Poehlmann R."/>
            <person name="Luedi P."/>
            <person name="Choi S."/>
            <person name="Wing R.A."/>
            <person name="Flavier A."/>
            <person name="Gaffney T.D."/>
            <person name="Philippsen P."/>
        </authorList>
    </citation>
    <scope>NUCLEOTIDE SEQUENCE [LARGE SCALE GENOMIC DNA]</scope>
    <source>
        <strain>ATCC 10895 / CBS 109.51 / FGSC 9923 / NRRL Y-1056</strain>
    </source>
</reference>
<reference key="2">
    <citation type="journal article" date="2013" name="G3 (Bethesda)">
        <title>Genomes of Ashbya fungi isolated from insects reveal four mating-type loci, numerous translocations, lack of transposons, and distinct gene duplications.</title>
        <authorList>
            <person name="Dietrich F.S."/>
            <person name="Voegeli S."/>
            <person name="Kuo S."/>
            <person name="Philippsen P."/>
        </authorList>
    </citation>
    <scope>GENOME REANNOTATION</scope>
    <source>
        <strain>ATCC 10895 / CBS 109.51 / FGSC 9923 / NRRL Y-1056</strain>
    </source>
</reference>
<organism>
    <name type="scientific">Eremothecium gossypii (strain ATCC 10895 / CBS 109.51 / FGSC 9923 / NRRL Y-1056)</name>
    <name type="common">Yeast</name>
    <name type="synonym">Ashbya gossypii</name>
    <dbReference type="NCBI Taxonomy" id="284811"/>
    <lineage>
        <taxon>Eukaryota</taxon>
        <taxon>Fungi</taxon>
        <taxon>Dikarya</taxon>
        <taxon>Ascomycota</taxon>
        <taxon>Saccharomycotina</taxon>
        <taxon>Saccharomycetes</taxon>
        <taxon>Saccharomycetales</taxon>
        <taxon>Saccharomycetaceae</taxon>
        <taxon>Eremothecium</taxon>
    </lineage>
</organism>
<keyword id="KW-0963">Cytoplasm</keyword>
<keyword id="KW-0206">Cytoskeleton</keyword>
<keyword id="KW-0342">GTP-binding</keyword>
<keyword id="KW-0493">Microtubule</keyword>
<keyword id="KW-0547">Nucleotide-binding</keyword>
<keyword id="KW-1185">Reference proteome</keyword>